<accession>Q21XE3</accession>
<protein>
    <recommendedName>
        <fullName evidence="1">DNA mismatch repair protein MutS</fullName>
    </recommendedName>
</protein>
<evidence type="ECO:0000255" key="1">
    <source>
        <dbReference type="HAMAP-Rule" id="MF_00096"/>
    </source>
</evidence>
<sequence length="882" mass="96095">MQNEKTQSKKPSPVPAEHSPMMAQYFGLKADYPDTLLFYRMGDFYELFFADAEKAARLLNITLTQRGQSAGQPVVMAGVPFHSVDTYLARLIKLGESVAICEQVGEVTGKGPVERKVVRVVTPGTLTDLELLSDKSESMLLAVHQGPRNTCGLAWLSVTQGEVHLAECAVDDLAQWVLRIAPGEIIFSAGTTPTFEARLRGAPLAGAVSVSVRPDWQFDAGLGEKKLLAQLQAASLAPWQAQDLPQAHAAAAALLGYAEHTQGQALTHIQSVRVQRSDELIDLPPTTRRNLELTQTLRGEDQPTLFSLLDTCMTGMGSRLLKNWLLEPRRDRGEAQQRLNAIAALQSGDAHTSRAGVWRQLREQLKGSTDVERITARIALRQVRPRELVALQLTLQKTELLTHTTRGLEVYLTQISGHLLAPEACADLLARAIDPEPAVLVRDGGVIASGFDAELDELRAIQTNCDGFLLDLEVREKARTGIANLRVQFNKVHGFFIEVTQGQVDKVPDDYRRRQTLKNAERFITPELKAFEDKALSAQERALAREKWLYEQVLDQLQVFVPALTRVARALATLDALCALTERSLTLDWCAPQFVKEPCLDITQGRHPVVQARLAETSSGAFIANDTRMGPKQRMQIITGPNMGGKSTYMRQIAVIVLLASMGSYVPASACRLGPIDAIHTRIGAADDLANAQSTFMLEMLEAAQILIAATPNSLVLMDEIGRGTSTFDGLALASSIATQLHDKTQAYTLFATHYFELTEFPAQHHAAINVHVSAAEAGRDIVFLHEIQPGPASKSYGIQVARLAGMPAAVLNQARQTLAALESQATQNQAQVDLFAAPPATETAADSAIETAVAALNPDNLSPREALEALYQLKKLASGKA</sequence>
<organism>
    <name type="scientific">Albidiferax ferrireducens (strain ATCC BAA-621 / DSM 15236 / T118)</name>
    <name type="common">Rhodoferax ferrireducens</name>
    <dbReference type="NCBI Taxonomy" id="338969"/>
    <lineage>
        <taxon>Bacteria</taxon>
        <taxon>Pseudomonadati</taxon>
        <taxon>Pseudomonadota</taxon>
        <taxon>Betaproteobacteria</taxon>
        <taxon>Burkholderiales</taxon>
        <taxon>Comamonadaceae</taxon>
        <taxon>Rhodoferax</taxon>
    </lineage>
</organism>
<feature type="chain" id="PRO_0000335213" description="DNA mismatch repair protein MutS">
    <location>
        <begin position="1"/>
        <end position="882"/>
    </location>
</feature>
<feature type="binding site" evidence="1">
    <location>
        <begin position="640"/>
        <end position="647"/>
    </location>
    <ligand>
        <name>ATP</name>
        <dbReference type="ChEBI" id="CHEBI:30616"/>
    </ligand>
</feature>
<keyword id="KW-0067">ATP-binding</keyword>
<keyword id="KW-0227">DNA damage</keyword>
<keyword id="KW-0234">DNA repair</keyword>
<keyword id="KW-0238">DNA-binding</keyword>
<keyword id="KW-0547">Nucleotide-binding</keyword>
<keyword id="KW-1185">Reference proteome</keyword>
<name>MUTS_ALBFT</name>
<gene>
    <name evidence="1" type="primary">mutS</name>
    <name type="ordered locus">Rfer_1832</name>
</gene>
<dbReference type="EMBL" id="CP000267">
    <property type="protein sequence ID" value="ABD69560.1"/>
    <property type="molecule type" value="Genomic_DNA"/>
</dbReference>
<dbReference type="RefSeq" id="WP_011464128.1">
    <property type="nucleotide sequence ID" value="NC_007908.1"/>
</dbReference>
<dbReference type="SMR" id="Q21XE3"/>
<dbReference type="STRING" id="338969.Rfer_1832"/>
<dbReference type="KEGG" id="rfr:Rfer_1832"/>
<dbReference type="eggNOG" id="COG0249">
    <property type="taxonomic scope" value="Bacteria"/>
</dbReference>
<dbReference type="HOGENOM" id="CLU_002472_4_0_4"/>
<dbReference type="OrthoDB" id="9802448at2"/>
<dbReference type="Proteomes" id="UP000008332">
    <property type="component" value="Chromosome"/>
</dbReference>
<dbReference type="GO" id="GO:0005829">
    <property type="term" value="C:cytosol"/>
    <property type="evidence" value="ECO:0007669"/>
    <property type="project" value="TreeGrafter"/>
</dbReference>
<dbReference type="GO" id="GO:0005524">
    <property type="term" value="F:ATP binding"/>
    <property type="evidence" value="ECO:0007669"/>
    <property type="project" value="UniProtKB-UniRule"/>
</dbReference>
<dbReference type="GO" id="GO:0140664">
    <property type="term" value="F:ATP-dependent DNA damage sensor activity"/>
    <property type="evidence" value="ECO:0007669"/>
    <property type="project" value="InterPro"/>
</dbReference>
<dbReference type="GO" id="GO:0003684">
    <property type="term" value="F:damaged DNA binding"/>
    <property type="evidence" value="ECO:0007669"/>
    <property type="project" value="UniProtKB-UniRule"/>
</dbReference>
<dbReference type="GO" id="GO:0030983">
    <property type="term" value="F:mismatched DNA binding"/>
    <property type="evidence" value="ECO:0007669"/>
    <property type="project" value="InterPro"/>
</dbReference>
<dbReference type="GO" id="GO:0006298">
    <property type="term" value="P:mismatch repair"/>
    <property type="evidence" value="ECO:0007669"/>
    <property type="project" value="UniProtKB-UniRule"/>
</dbReference>
<dbReference type="FunFam" id="3.40.1170.10:FF:000001">
    <property type="entry name" value="DNA mismatch repair protein MutS"/>
    <property type="match status" value="1"/>
</dbReference>
<dbReference type="Gene3D" id="1.10.1420.10">
    <property type="match status" value="2"/>
</dbReference>
<dbReference type="Gene3D" id="6.10.140.430">
    <property type="match status" value="1"/>
</dbReference>
<dbReference type="Gene3D" id="3.40.1170.10">
    <property type="entry name" value="DNA repair protein MutS, domain I"/>
    <property type="match status" value="1"/>
</dbReference>
<dbReference type="Gene3D" id="3.30.420.110">
    <property type="entry name" value="MutS, connector domain"/>
    <property type="match status" value="1"/>
</dbReference>
<dbReference type="Gene3D" id="3.40.50.300">
    <property type="entry name" value="P-loop containing nucleotide triphosphate hydrolases"/>
    <property type="match status" value="1"/>
</dbReference>
<dbReference type="HAMAP" id="MF_00096">
    <property type="entry name" value="MutS"/>
    <property type="match status" value="1"/>
</dbReference>
<dbReference type="InterPro" id="IPR005748">
    <property type="entry name" value="DNA_mismatch_repair_MutS"/>
</dbReference>
<dbReference type="InterPro" id="IPR007695">
    <property type="entry name" value="DNA_mismatch_repair_MutS-lik_N"/>
</dbReference>
<dbReference type="InterPro" id="IPR017261">
    <property type="entry name" value="DNA_mismatch_repair_MutS/MSH"/>
</dbReference>
<dbReference type="InterPro" id="IPR000432">
    <property type="entry name" value="DNA_mismatch_repair_MutS_C"/>
</dbReference>
<dbReference type="InterPro" id="IPR007861">
    <property type="entry name" value="DNA_mismatch_repair_MutS_clamp"/>
</dbReference>
<dbReference type="InterPro" id="IPR007696">
    <property type="entry name" value="DNA_mismatch_repair_MutS_core"/>
</dbReference>
<dbReference type="InterPro" id="IPR016151">
    <property type="entry name" value="DNA_mismatch_repair_MutS_N"/>
</dbReference>
<dbReference type="InterPro" id="IPR036187">
    <property type="entry name" value="DNA_mismatch_repair_MutS_sf"/>
</dbReference>
<dbReference type="InterPro" id="IPR007860">
    <property type="entry name" value="DNA_mmatch_repair_MutS_con_dom"/>
</dbReference>
<dbReference type="InterPro" id="IPR045076">
    <property type="entry name" value="MutS"/>
</dbReference>
<dbReference type="InterPro" id="IPR036678">
    <property type="entry name" value="MutS_con_dom_sf"/>
</dbReference>
<dbReference type="InterPro" id="IPR027417">
    <property type="entry name" value="P-loop_NTPase"/>
</dbReference>
<dbReference type="NCBIfam" id="TIGR01070">
    <property type="entry name" value="mutS1"/>
    <property type="match status" value="1"/>
</dbReference>
<dbReference type="NCBIfam" id="NF003810">
    <property type="entry name" value="PRK05399.1"/>
    <property type="match status" value="1"/>
</dbReference>
<dbReference type="PANTHER" id="PTHR11361:SF34">
    <property type="entry name" value="DNA MISMATCH REPAIR PROTEIN MSH1, MITOCHONDRIAL"/>
    <property type="match status" value="1"/>
</dbReference>
<dbReference type="PANTHER" id="PTHR11361">
    <property type="entry name" value="DNA MISMATCH REPAIR PROTEIN MUTS FAMILY MEMBER"/>
    <property type="match status" value="1"/>
</dbReference>
<dbReference type="Pfam" id="PF01624">
    <property type="entry name" value="MutS_I"/>
    <property type="match status" value="1"/>
</dbReference>
<dbReference type="Pfam" id="PF05188">
    <property type="entry name" value="MutS_II"/>
    <property type="match status" value="1"/>
</dbReference>
<dbReference type="Pfam" id="PF05192">
    <property type="entry name" value="MutS_III"/>
    <property type="match status" value="1"/>
</dbReference>
<dbReference type="Pfam" id="PF05190">
    <property type="entry name" value="MutS_IV"/>
    <property type="match status" value="1"/>
</dbReference>
<dbReference type="Pfam" id="PF00488">
    <property type="entry name" value="MutS_V"/>
    <property type="match status" value="1"/>
</dbReference>
<dbReference type="PIRSF" id="PIRSF037677">
    <property type="entry name" value="DNA_mis_repair_Msh6"/>
    <property type="match status" value="1"/>
</dbReference>
<dbReference type="SMART" id="SM00534">
    <property type="entry name" value="MUTSac"/>
    <property type="match status" value="1"/>
</dbReference>
<dbReference type="SMART" id="SM00533">
    <property type="entry name" value="MUTSd"/>
    <property type="match status" value="1"/>
</dbReference>
<dbReference type="SUPFAM" id="SSF55271">
    <property type="entry name" value="DNA repair protein MutS, domain I"/>
    <property type="match status" value="1"/>
</dbReference>
<dbReference type="SUPFAM" id="SSF53150">
    <property type="entry name" value="DNA repair protein MutS, domain II"/>
    <property type="match status" value="1"/>
</dbReference>
<dbReference type="SUPFAM" id="SSF48334">
    <property type="entry name" value="DNA repair protein MutS, domain III"/>
    <property type="match status" value="1"/>
</dbReference>
<dbReference type="SUPFAM" id="SSF52540">
    <property type="entry name" value="P-loop containing nucleoside triphosphate hydrolases"/>
    <property type="match status" value="1"/>
</dbReference>
<dbReference type="PROSITE" id="PS00486">
    <property type="entry name" value="DNA_MISMATCH_REPAIR_2"/>
    <property type="match status" value="1"/>
</dbReference>
<comment type="function">
    <text evidence="1">This protein is involved in the repair of mismatches in DNA. It is possible that it carries out the mismatch recognition step. This protein has a weak ATPase activity.</text>
</comment>
<comment type="similarity">
    <text evidence="1">Belongs to the DNA mismatch repair MutS family.</text>
</comment>
<proteinExistence type="inferred from homology"/>
<reference key="1">
    <citation type="submission" date="2006-02" db="EMBL/GenBank/DDBJ databases">
        <title>Complete sequence of chromosome of Rhodoferax ferrireducens DSM 15236.</title>
        <authorList>
            <person name="Copeland A."/>
            <person name="Lucas S."/>
            <person name="Lapidus A."/>
            <person name="Barry K."/>
            <person name="Detter J.C."/>
            <person name="Glavina del Rio T."/>
            <person name="Hammon N."/>
            <person name="Israni S."/>
            <person name="Pitluck S."/>
            <person name="Brettin T."/>
            <person name="Bruce D."/>
            <person name="Han C."/>
            <person name="Tapia R."/>
            <person name="Gilna P."/>
            <person name="Kiss H."/>
            <person name="Schmutz J."/>
            <person name="Larimer F."/>
            <person name="Land M."/>
            <person name="Kyrpides N."/>
            <person name="Ivanova N."/>
            <person name="Richardson P."/>
        </authorList>
    </citation>
    <scope>NUCLEOTIDE SEQUENCE [LARGE SCALE GENOMIC DNA]</scope>
    <source>
        <strain>ATCC BAA-621 / DSM 15236 / T118</strain>
    </source>
</reference>